<reference key="1">
    <citation type="journal article" date="2003" name="J. Bacteriol.">
        <title>Complete genome sequence of the ammonia-oxidizing bacterium and obligate chemolithoautotroph Nitrosomonas europaea.</title>
        <authorList>
            <person name="Chain P."/>
            <person name="Lamerdin J.E."/>
            <person name="Larimer F.W."/>
            <person name="Regala W."/>
            <person name="Lao V."/>
            <person name="Land M.L."/>
            <person name="Hauser L."/>
            <person name="Hooper A.B."/>
            <person name="Klotz M.G."/>
            <person name="Norton J."/>
            <person name="Sayavedra-Soto L.A."/>
            <person name="Arciero D.M."/>
            <person name="Hommes N.G."/>
            <person name="Whittaker M.M."/>
            <person name="Arp D.J."/>
        </authorList>
    </citation>
    <scope>NUCLEOTIDE SEQUENCE [LARGE SCALE GENOMIC DNA]</scope>
    <source>
        <strain>ATCC 19718 / CIP 103999 / KCTC 2705 / NBRC 14298</strain>
    </source>
</reference>
<dbReference type="EC" id="7.6.2.-" evidence="1"/>
<dbReference type="EMBL" id="AL954747">
    <property type="protein sequence ID" value="CAD84967.1"/>
    <property type="molecule type" value="Genomic_DNA"/>
</dbReference>
<dbReference type="RefSeq" id="WP_011111661.1">
    <property type="nucleotide sequence ID" value="NC_004757.1"/>
</dbReference>
<dbReference type="SMR" id="Q82VL9"/>
<dbReference type="STRING" id="228410.NE1056"/>
<dbReference type="GeneID" id="87104243"/>
<dbReference type="KEGG" id="neu:NE1056"/>
<dbReference type="eggNOG" id="COG1136">
    <property type="taxonomic scope" value="Bacteria"/>
</dbReference>
<dbReference type="HOGENOM" id="CLU_000604_1_22_4"/>
<dbReference type="OrthoDB" id="8524638at2"/>
<dbReference type="PhylomeDB" id="Q82VL9"/>
<dbReference type="Proteomes" id="UP000001416">
    <property type="component" value="Chromosome"/>
</dbReference>
<dbReference type="GO" id="GO:0005886">
    <property type="term" value="C:plasma membrane"/>
    <property type="evidence" value="ECO:0007669"/>
    <property type="project" value="UniProtKB-SubCell"/>
</dbReference>
<dbReference type="GO" id="GO:0005524">
    <property type="term" value="F:ATP binding"/>
    <property type="evidence" value="ECO:0007669"/>
    <property type="project" value="UniProtKB-KW"/>
</dbReference>
<dbReference type="GO" id="GO:0016887">
    <property type="term" value="F:ATP hydrolysis activity"/>
    <property type="evidence" value="ECO:0007669"/>
    <property type="project" value="InterPro"/>
</dbReference>
<dbReference type="GO" id="GO:0022857">
    <property type="term" value="F:transmembrane transporter activity"/>
    <property type="evidence" value="ECO:0007669"/>
    <property type="project" value="TreeGrafter"/>
</dbReference>
<dbReference type="GO" id="GO:0044874">
    <property type="term" value="P:lipoprotein localization to outer membrane"/>
    <property type="evidence" value="ECO:0007669"/>
    <property type="project" value="TreeGrafter"/>
</dbReference>
<dbReference type="GO" id="GO:0089705">
    <property type="term" value="P:protein localization to outer membrane"/>
    <property type="evidence" value="ECO:0007669"/>
    <property type="project" value="TreeGrafter"/>
</dbReference>
<dbReference type="CDD" id="cd03255">
    <property type="entry name" value="ABC_MJ0796_LolCDE_FtsE"/>
    <property type="match status" value="1"/>
</dbReference>
<dbReference type="FunFam" id="3.40.50.300:FF:000230">
    <property type="entry name" value="Lipoprotein-releasing system ATP-binding protein LolD"/>
    <property type="match status" value="1"/>
</dbReference>
<dbReference type="Gene3D" id="3.40.50.300">
    <property type="entry name" value="P-loop containing nucleotide triphosphate hydrolases"/>
    <property type="match status" value="1"/>
</dbReference>
<dbReference type="InterPro" id="IPR003593">
    <property type="entry name" value="AAA+_ATPase"/>
</dbReference>
<dbReference type="InterPro" id="IPR003439">
    <property type="entry name" value="ABC_transporter-like_ATP-bd"/>
</dbReference>
<dbReference type="InterPro" id="IPR017871">
    <property type="entry name" value="ABC_transporter-like_CS"/>
</dbReference>
<dbReference type="InterPro" id="IPR015854">
    <property type="entry name" value="ABC_transpr_LolD-like"/>
</dbReference>
<dbReference type="InterPro" id="IPR011924">
    <property type="entry name" value="LolD_lipo_ATP-bd"/>
</dbReference>
<dbReference type="InterPro" id="IPR017911">
    <property type="entry name" value="MacB-like_ATP-bd"/>
</dbReference>
<dbReference type="InterPro" id="IPR027417">
    <property type="entry name" value="P-loop_NTPase"/>
</dbReference>
<dbReference type="NCBIfam" id="TIGR02211">
    <property type="entry name" value="LolD_lipo_ex"/>
    <property type="match status" value="1"/>
</dbReference>
<dbReference type="PANTHER" id="PTHR24220">
    <property type="entry name" value="IMPORT ATP-BINDING PROTEIN"/>
    <property type="match status" value="1"/>
</dbReference>
<dbReference type="PANTHER" id="PTHR24220:SF689">
    <property type="entry name" value="LIPOPROTEIN-RELEASING SYSTEM ATP-BINDING PROTEIN LOLD"/>
    <property type="match status" value="1"/>
</dbReference>
<dbReference type="Pfam" id="PF00005">
    <property type="entry name" value="ABC_tran"/>
    <property type="match status" value="1"/>
</dbReference>
<dbReference type="SMART" id="SM00382">
    <property type="entry name" value="AAA"/>
    <property type="match status" value="1"/>
</dbReference>
<dbReference type="SUPFAM" id="SSF52540">
    <property type="entry name" value="P-loop containing nucleoside triphosphate hydrolases"/>
    <property type="match status" value="1"/>
</dbReference>
<dbReference type="PROSITE" id="PS00211">
    <property type="entry name" value="ABC_TRANSPORTER_1"/>
    <property type="match status" value="1"/>
</dbReference>
<dbReference type="PROSITE" id="PS50893">
    <property type="entry name" value="ABC_TRANSPORTER_2"/>
    <property type="match status" value="1"/>
</dbReference>
<dbReference type="PROSITE" id="PS51244">
    <property type="entry name" value="LOLD"/>
    <property type="match status" value="1"/>
</dbReference>
<protein>
    <recommendedName>
        <fullName evidence="1">Lipoprotein-releasing system ATP-binding protein LolD</fullName>
        <ecNumber evidence="1">7.6.2.-</ecNumber>
    </recommendedName>
</protein>
<gene>
    <name evidence="1" type="primary">lolD</name>
    <name type="ordered locus">NE1056</name>
</gene>
<proteinExistence type="inferred from homology"/>
<name>LOLD_NITEU</name>
<accession>Q82VL9</accession>
<keyword id="KW-0067">ATP-binding</keyword>
<keyword id="KW-0997">Cell inner membrane</keyword>
<keyword id="KW-1003">Cell membrane</keyword>
<keyword id="KW-0472">Membrane</keyword>
<keyword id="KW-0547">Nucleotide-binding</keyword>
<keyword id="KW-1185">Reference proteome</keyword>
<keyword id="KW-1278">Translocase</keyword>
<keyword id="KW-0813">Transport</keyword>
<evidence type="ECO:0000255" key="1">
    <source>
        <dbReference type="HAMAP-Rule" id="MF_01708"/>
    </source>
</evidence>
<organism>
    <name type="scientific">Nitrosomonas europaea (strain ATCC 19718 / CIP 103999 / KCTC 2705 / NBRC 14298)</name>
    <dbReference type="NCBI Taxonomy" id="228410"/>
    <lineage>
        <taxon>Bacteria</taxon>
        <taxon>Pseudomonadati</taxon>
        <taxon>Pseudomonadota</taxon>
        <taxon>Betaproteobacteria</taxon>
        <taxon>Nitrosomonadales</taxon>
        <taxon>Nitrosomonadaceae</taxon>
        <taxon>Nitrosomonas</taxon>
    </lineage>
</organism>
<feature type="chain" id="PRO_0000092444" description="Lipoprotein-releasing system ATP-binding protein LolD">
    <location>
        <begin position="1"/>
        <end position="224"/>
    </location>
</feature>
<feature type="domain" description="ABC transporter" evidence="1">
    <location>
        <begin position="6"/>
        <end position="224"/>
    </location>
</feature>
<feature type="binding site" evidence="1">
    <location>
        <begin position="42"/>
        <end position="49"/>
    </location>
    <ligand>
        <name>ATP</name>
        <dbReference type="ChEBI" id="CHEBI:30616"/>
    </ligand>
</feature>
<sequence length="224" mass="24443">MSKIIIACRDLYKSYFQGNLEVPVLHGIDLQVNEGEMVAIVGASGSGKSTLLHVLGGLDKPTRGEVTLLDRELSTISEAERGSLRNHALGFVYQFHHLLPEFSAQENVAMPLFIRRMNKKAAMEQAAAMLQRVGLGHRLTHTPGELSGGERQRAAVARALVTRPACVLADEPTGNLDRHTAEAVFDLMLELNHEANAGLVIVTHDTQLASRADRVLHLVDGMLQ</sequence>
<comment type="function">
    <text evidence="1">Part of the ABC transporter complex LolCDE involved in the translocation of mature outer membrane-directed lipoproteins, from the inner membrane to the periplasmic chaperone, LolA. Responsible for the formation of the LolA-lipoprotein complex in an ATP-dependent manner.</text>
</comment>
<comment type="subunit">
    <text evidence="1">The complex is composed of two ATP-binding proteins (LolD) and two transmembrane proteins (LolC and LolE).</text>
</comment>
<comment type="subcellular location">
    <subcellularLocation>
        <location evidence="1">Cell inner membrane</location>
        <topology evidence="1">Peripheral membrane protein</topology>
    </subcellularLocation>
</comment>
<comment type="similarity">
    <text evidence="1">Belongs to the ABC transporter superfamily. Lipoprotein translocase (TC 3.A.1.125) family.</text>
</comment>